<accession>A1RQB4</accession>
<gene>
    <name evidence="1" type="primary">atpF</name>
    <name type="ordered locus">Sputw3181_4057</name>
</gene>
<evidence type="ECO:0000255" key="1">
    <source>
        <dbReference type="HAMAP-Rule" id="MF_01398"/>
    </source>
</evidence>
<proteinExistence type="inferred from homology"/>
<keyword id="KW-0066">ATP synthesis</keyword>
<keyword id="KW-0997">Cell inner membrane</keyword>
<keyword id="KW-1003">Cell membrane</keyword>
<keyword id="KW-0138">CF(0)</keyword>
<keyword id="KW-0375">Hydrogen ion transport</keyword>
<keyword id="KW-0406">Ion transport</keyword>
<keyword id="KW-0472">Membrane</keyword>
<keyword id="KW-0812">Transmembrane</keyword>
<keyword id="KW-1133">Transmembrane helix</keyword>
<keyword id="KW-0813">Transport</keyword>
<sequence>MSINATLLGQAISFALFVWFCIKFVWPPLMNAIEERQKKIADGLADAGRAAKDLELAQAKATEQLKEAKVTANEIIEQANKRKAQIVEEAKAEADAERAKIIAQGKAEIENERSRVKDDLRKQVAALAVLGAERILERSIDQAAHSDIVDKLVAEI</sequence>
<protein>
    <recommendedName>
        <fullName evidence="1">ATP synthase subunit b</fullName>
    </recommendedName>
    <alternativeName>
        <fullName evidence="1">ATP synthase F(0) sector subunit b</fullName>
    </alternativeName>
    <alternativeName>
        <fullName evidence="1">ATPase subunit I</fullName>
    </alternativeName>
    <alternativeName>
        <fullName evidence="1">F-type ATPase subunit b</fullName>
        <shortName evidence="1">F-ATPase subunit b</shortName>
    </alternativeName>
</protein>
<reference key="1">
    <citation type="submission" date="2006-12" db="EMBL/GenBank/DDBJ databases">
        <title>Complete sequence of Shewanella sp. W3-18-1.</title>
        <authorList>
            <consortium name="US DOE Joint Genome Institute"/>
            <person name="Copeland A."/>
            <person name="Lucas S."/>
            <person name="Lapidus A."/>
            <person name="Barry K."/>
            <person name="Detter J.C."/>
            <person name="Glavina del Rio T."/>
            <person name="Hammon N."/>
            <person name="Israni S."/>
            <person name="Dalin E."/>
            <person name="Tice H."/>
            <person name="Pitluck S."/>
            <person name="Chain P."/>
            <person name="Malfatti S."/>
            <person name="Shin M."/>
            <person name="Vergez L."/>
            <person name="Schmutz J."/>
            <person name="Larimer F."/>
            <person name="Land M."/>
            <person name="Hauser L."/>
            <person name="Kyrpides N."/>
            <person name="Lykidis A."/>
            <person name="Tiedje J."/>
            <person name="Richardson P."/>
        </authorList>
    </citation>
    <scope>NUCLEOTIDE SEQUENCE [LARGE SCALE GENOMIC DNA]</scope>
    <source>
        <strain>W3-18-1</strain>
    </source>
</reference>
<dbReference type="EMBL" id="CP000503">
    <property type="protein sequence ID" value="ABM26859.1"/>
    <property type="molecule type" value="Genomic_DNA"/>
</dbReference>
<dbReference type="RefSeq" id="WP_011791280.1">
    <property type="nucleotide sequence ID" value="NC_008750.1"/>
</dbReference>
<dbReference type="SMR" id="A1RQB4"/>
<dbReference type="GeneID" id="67445465"/>
<dbReference type="KEGG" id="shw:Sputw3181_4057"/>
<dbReference type="HOGENOM" id="CLU_079215_4_5_6"/>
<dbReference type="Proteomes" id="UP000002597">
    <property type="component" value="Chromosome"/>
</dbReference>
<dbReference type="GO" id="GO:0005886">
    <property type="term" value="C:plasma membrane"/>
    <property type="evidence" value="ECO:0007669"/>
    <property type="project" value="UniProtKB-SubCell"/>
</dbReference>
<dbReference type="GO" id="GO:0045259">
    <property type="term" value="C:proton-transporting ATP synthase complex"/>
    <property type="evidence" value="ECO:0007669"/>
    <property type="project" value="UniProtKB-KW"/>
</dbReference>
<dbReference type="GO" id="GO:0046933">
    <property type="term" value="F:proton-transporting ATP synthase activity, rotational mechanism"/>
    <property type="evidence" value="ECO:0007669"/>
    <property type="project" value="UniProtKB-UniRule"/>
</dbReference>
<dbReference type="GO" id="GO:0046961">
    <property type="term" value="F:proton-transporting ATPase activity, rotational mechanism"/>
    <property type="evidence" value="ECO:0007669"/>
    <property type="project" value="TreeGrafter"/>
</dbReference>
<dbReference type="CDD" id="cd06503">
    <property type="entry name" value="ATP-synt_Fo_b"/>
    <property type="match status" value="1"/>
</dbReference>
<dbReference type="Gene3D" id="6.10.250.1580">
    <property type="match status" value="1"/>
</dbReference>
<dbReference type="HAMAP" id="MF_01398">
    <property type="entry name" value="ATP_synth_b_bprime"/>
    <property type="match status" value="1"/>
</dbReference>
<dbReference type="InterPro" id="IPR028987">
    <property type="entry name" value="ATP_synth_B-like_membr_sf"/>
</dbReference>
<dbReference type="InterPro" id="IPR002146">
    <property type="entry name" value="ATP_synth_b/b'su_bac/chlpt"/>
</dbReference>
<dbReference type="InterPro" id="IPR005864">
    <property type="entry name" value="ATP_synth_F0_bsu_bac"/>
</dbReference>
<dbReference type="InterPro" id="IPR050059">
    <property type="entry name" value="ATP_synthase_B_chain"/>
</dbReference>
<dbReference type="NCBIfam" id="TIGR01144">
    <property type="entry name" value="ATP_synt_b"/>
    <property type="match status" value="1"/>
</dbReference>
<dbReference type="NCBIfam" id="NF004411">
    <property type="entry name" value="PRK05759.1-2"/>
    <property type="match status" value="1"/>
</dbReference>
<dbReference type="NCBIfam" id="NF004413">
    <property type="entry name" value="PRK05759.1-4"/>
    <property type="match status" value="1"/>
</dbReference>
<dbReference type="PANTHER" id="PTHR33445:SF1">
    <property type="entry name" value="ATP SYNTHASE SUBUNIT B"/>
    <property type="match status" value="1"/>
</dbReference>
<dbReference type="PANTHER" id="PTHR33445">
    <property type="entry name" value="ATP SYNTHASE SUBUNIT B', CHLOROPLASTIC"/>
    <property type="match status" value="1"/>
</dbReference>
<dbReference type="Pfam" id="PF00430">
    <property type="entry name" value="ATP-synt_B"/>
    <property type="match status" value="1"/>
</dbReference>
<dbReference type="SUPFAM" id="SSF81573">
    <property type="entry name" value="F1F0 ATP synthase subunit B, membrane domain"/>
    <property type="match status" value="1"/>
</dbReference>
<name>ATPF_SHESW</name>
<comment type="function">
    <text evidence="1">F(1)F(0) ATP synthase produces ATP from ADP in the presence of a proton or sodium gradient. F-type ATPases consist of two structural domains, F(1) containing the extramembraneous catalytic core and F(0) containing the membrane proton channel, linked together by a central stalk and a peripheral stalk. During catalysis, ATP synthesis in the catalytic domain of F(1) is coupled via a rotary mechanism of the central stalk subunits to proton translocation.</text>
</comment>
<comment type="function">
    <text evidence="1">Component of the F(0) channel, it forms part of the peripheral stalk, linking F(1) to F(0).</text>
</comment>
<comment type="subunit">
    <text evidence="1">F-type ATPases have 2 components, F(1) - the catalytic core - and F(0) - the membrane proton channel. F(1) has five subunits: alpha(3), beta(3), gamma(1), delta(1), epsilon(1). F(0) has three main subunits: a(1), b(2) and c(10-14). The alpha and beta chains form an alternating ring which encloses part of the gamma chain. F(1) is attached to F(0) by a central stalk formed by the gamma and epsilon chains, while a peripheral stalk is formed by the delta and b chains.</text>
</comment>
<comment type="subcellular location">
    <subcellularLocation>
        <location evidence="1">Cell inner membrane</location>
        <topology evidence="1">Single-pass membrane protein</topology>
    </subcellularLocation>
</comment>
<comment type="similarity">
    <text evidence="1">Belongs to the ATPase B chain family.</text>
</comment>
<organism>
    <name type="scientific">Shewanella sp. (strain W3-18-1)</name>
    <dbReference type="NCBI Taxonomy" id="351745"/>
    <lineage>
        <taxon>Bacteria</taxon>
        <taxon>Pseudomonadati</taxon>
        <taxon>Pseudomonadota</taxon>
        <taxon>Gammaproteobacteria</taxon>
        <taxon>Alteromonadales</taxon>
        <taxon>Shewanellaceae</taxon>
        <taxon>Shewanella</taxon>
    </lineage>
</organism>
<feature type="chain" id="PRO_0000368768" description="ATP synthase subunit b">
    <location>
        <begin position="1"/>
        <end position="156"/>
    </location>
</feature>
<feature type="transmembrane region" description="Helical" evidence="1">
    <location>
        <begin position="7"/>
        <end position="29"/>
    </location>
</feature>